<accession>B9LAL6</accession>
<proteinExistence type="inferred from homology"/>
<dbReference type="EMBL" id="CP001364">
    <property type="protein sequence ID" value="ACM52562.1"/>
    <property type="molecule type" value="Genomic_DNA"/>
</dbReference>
<dbReference type="SMR" id="B9LAL6"/>
<dbReference type="KEGG" id="chl:Chy400_1141"/>
<dbReference type="HOGENOM" id="CLU_062974_2_2_0"/>
<dbReference type="OrthoDB" id="9781053at2"/>
<dbReference type="GO" id="GO:0005829">
    <property type="term" value="C:cytosol"/>
    <property type="evidence" value="ECO:0007669"/>
    <property type="project" value="TreeGrafter"/>
</dbReference>
<dbReference type="GO" id="GO:0003677">
    <property type="term" value="F:DNA binding"/>
    <property type="evidence" value="ECO:0007669"/>
    <property type="project" value="UniProtKB-UniRule"/>
</dbReference>
<dbReference type="GO" id="GO:0006355">
    <property type="term" value="P:regulation of DNA-templated transcription"/>
    <property type="evidence" value="ECO:0007669"/>
    <property type="project" value="UniProtKB-UniRule"/>
</dbReference>
<dbReference type="FunFam" id="1.10.10.200:FF:000002">
    <property type="entry name" value="Probable transcriptional regulatory protein CLM62_37755"/>
    <property type="match status" value="1"/>
</dbReference>
<dbReference type="Gene3D" id="1.10.10.200">
    <property type="match status" value="1"/>
</dbReference>
<dbReference type="Gene3D" id="3.30.70.980">
    <property type="match status" value="2"/>
</dbReference>
<dbReference type="HAMAP" id="MF_00693">
    <property type="entry name" value="Transcrip_reg_TACO1"/>
    <property type="match status" value="1"/>
</dbReference>
<dbReference type="InterPro" id="IPR017856">
    <property type="entry name" value="Integrase-like_N"/>
</dbReference>
<dbReference type="InterPro" id="IPR048300">
    <property type="entry name" value="TACO1_YebC-like_2nd/3rd_dom"/>
</dbReference>
<dbReference type="InterPro" id="IPR049083">
    <property type="entry name" value="TACO1_YebC_N"/>
</dbReference>
<dbReference type="InterPro" id="IPR002876">
    <property type="entry name" value="Transcrip_reg_TACO1-like"/>
</dbReference>
<dbReference type="InterPro" id="IPR026564">
    <property type="entry name" value="Transcrip_reg_TACO1-like_dom3"/>
</dbReference>
<dbReference type="InterPro" id="IPR029072">
    <property type="entry name" value="YebC-like"/>
</dbReference>
<dbReference type="NCBIfam" id="NF001030">
    <property type="entry name" value="PRK00110.1"/>
    <property type="match status" value="1"/>
</dbReference>
<dbReference type="NCBIfam" id="NF009044">
    <property type="entry name" value="PRK12378.1"/>
    <property type="match status" value="1"/>
</dbReference>
<dbReference type="NCBIfam" id="TIGR01033">
    <property type="entry name" value="YebC/PmpR family DNA-binding transcriptional regulator"/>
    <property type="match status" value="1"/>
</dbReference>
<dbReference type="PANTHER" id="PTHR12532:SF6">
    <property type="entry name" value="TRANSCRIPTIONAL REGULATORY PROTEIN YEBC-RELATED"/>
    <property type="match status" value="1"/>
</dbReference>
<dbReference type="PANTHER" id="PTHR12532">
    <property type="entry name" value="TRANSLATIONAL ACTIVATOR OF CYTOCHROME C OXIDASE 1"/>
    <property type="match status" value="1"/>
</dbReference>
<dbReference type="Pfam" id="PF20772">
    <property type="entry name" value="TACO1_YebC_N"/>
    <property type="match status" value="1"/>
</dbReference>
<dbReference type="Pfam" id="PF01709">
    <property type="entry name" value="Transcrip_reg"/>
    <property type="match status" value="1"/>
</dbReference>
<dbReference type="SUPFAM" id="SSF75625">
    <property type="entry name" value="YebC-like"/>
    <property type="match status" value="1"/>
</dbReference>
<gene>
    <name type="ordered locus">Chy400_1141</name>
</gene>
<evidence type="ECO:0000255" key="1">
    <source>
        <dbReference type="HAMAP-Rule" id="MF_00693"/>
    </source>
</evidence>
<evidence type="ECO:0000256" key="2">
    <source>
        <dbReference type="SAM" id="MobiDB-lite"/>
    </source>
</evidence>
<reference key="1">
    <citation type="submission" date="2009-01" db="EMBL/GenBank/DDBJ databases">
        <title>Complete sequence of Chloroflexus sp. Y-400-fl.</title>
        <authorList>
            <consortium name="US DOE Joint Genome Institute"/>
            <person name="Lucas S."/>
            <person name="Copeland A."/>
            <person name="Lapidus A."/>
            <person name="Glavina del Rio T."/>
            <person name="Dalin E."/>
            <person name="Tice H."/>
            <person name="Bruce D."/>
            <person name="Goodwin L."/>
            <person name="Pitluck S."/>
            <person name="Sims D."/>
            <person name="Kiss H."/>
            <person name="Brettin T."/>
            <person name="Detter J.C."/>
            <person name="Han C."/>
            <person name="Larimer F."/>
            <person name="Land M."/>
            <person name="Hauser L."/>
            <person name="Kyrpides N."/>
            <person name="Ovchinnikova G."/>
            <person name="Bryant D.A."/>
            <person name="Richardson P."/>
        </authorList>
    </citation>
    <scope>NUCLEOTIDE SEQUENCE [LARGE SCALE GENOMIC DNA]</scope>
    <source>
        <strain>ATCC 29364 / DSM 637 / Y-400-fl</strain>
    </source>
</reference>
<comment type="subcellular location">
    <subcellularLocation>
        <location evidence="1">Cytoplasm</location>
    </subcellularLocation>
</comment>
<comment type="similarity">
    <text evidence="1">Belongs to the TACO1 family.</text>
</comment>
<organism>
    <name type="scientific">Chloroflexus aurantiacus (strain ATCC 29364 / DSM 637 / Y-400-fl)</name>
    <dbReference type="NCBI Taxonomy" id="480224"/>
    <lineage>
        <taxon>Bacteria</taxon>
        <taxon>Bacillati</taxon>
        <taxon>Chloroflexota</taxon>
        <taxon>Chloroflexia</taxon>
        <taxon>Chloroflexales</taxon>
        <taxon>Chloroflexineae</taxon>
        <taxon>Chloroflexaceae</taxon>
        <taxon>Chloroflexus</taxon>
    </lineage>
</organism>
<feature type="chain" id="PRO_1000200087" description="Probable transcriptional regulatory protein Chy400_1141">
    <location>
        <begin position="1"/>
        <end position="252"/>
    </location>
</feature>
<feature type="region of interest" description="Disordered" evidence="2">
    <location>
        <begin position="1"/>
        <end position="22"/>
    </location>
</feature>
<feature type="compositionally biased region" description="Basic residues" evidence="2">
    <location>
        <begin position="1"/>
        <end position="14"/>
    </location>
</feature>
<protein>
    <recommendedName>
        <fullName evidence="1">Probable transcriptional regulatory protein Chy400_1141</fullName>
    </recommendedName>
</protein>
<name>Y1141_CHLSY</name>
<sequence length="252" mass="27887">MSGHSKWHTIRRTKGVNDQRRGQLFTKLARDITIATREGGSGDPDLNFRLRLAIEKARANNMPNENIQRAIDRGLGKSNEAALEEIFYEGYGPGGVAILIEAATDNRNRTNSEVRATFNKNGGNPGEPGSVSWMFEQKGLITIDLSAVKHDPDELQLMAIDAGADDVVVDDETLEIYCDWTQLNAIRQALLDQGVPVANAEKIMRAKTLIQPDEKDALAALRLIEKLEDLDDVQKVYSNLDITAELVARFDA</sequence>
<keyword id="KW-0963">Cytoplasm</keyword>
<keyword id="KW-0238">DNA-binding</keyword>
<keyword id="KW-0804">Transcription</keyword>
<keyword id="KW-0805">Transcription regulation</keyword>